<comment type="function">
    <text evidence="1 2">Splice factor required for alternative splicing of TRA2B/SFRS10 transcripts. Binds to ssRNA containing the consensus sequence 5'-AGGUAA-3' (By similarity). May interfere with constitutive 5'-splice site selection (By similarity).</text>
</comment>
<comment type="subunit">
    <text evidence="1">Interacts with the C-terminal half of SNRNP70, the Arg/Ser-rich domain of AKAP17A as well as with U2AF1 and CLK1.</text>
</comment>
<comment type="subcellular location">
    <subcellularLocation>
        <location evidence="1">Nucleus</location>
    </subcellularLocation>
</comment>
<comment type="alternative products">
    <event type="alternative splicing"/>
    <isoform>
        <id>Q9R020-1</id>
        <name>1</name>
        <sequence type="displayed"/>
    </isoform>
    <isoform>
        <id>Q9R020-2</id>
        <name>2</name>
        <sequence type="described" ref="VSP_024946"/>
    </isoform>
</comment>
<comment type="domain">
    <text evidence="1">The RanBP2-type zinc fingers mediate binding to RNA.</text>
</comment>
<comment type="similarity">
    <text evidence="6">Belongs to the ZRANB2 family.</text>
</comment>
<comment type="sequence caution" evidence="6">
    <conflict type="frameshift">
        <sequence resource="EMBL-CDS" id="AAF04474"/>
    </conflict>
</comment>
<comment type="sequence caution" evidence="6">
    <conflict type="frameshift">
        <sequence resource="EMBL-CDS" id="BAE36054"/>
    </conflict>
</comment>
<comment type="sequence caution" evidence="6">
    <conflict type="erroneous initiation">
        <sequence resource="EMBL-CDS" id="BAE38837"/>
    </conflict>
</comment>
<comment type="sequence caution" evidence="6">
    <conflict type="frameshift">
        <sequence resource="EMBL-CDS" id="BAE39790"/>
    </conflict>
</comment>
<comment type="sequence caution" evidence="6">
    <conflict type="frameshift">
        <sequence resource="EMBL-CDS" id="BAE40017"/>
    </conflict>
</comment>
<evidence type="ECO:0000250" key="1"/>
<evidence type="ECO:0000250" key="2">
    <source>
        <dbReference type="UniProtKB" id="O95218"/>
    </source>
</evidence>
<evidence type="ECO:0000255" key="3">
    <source>
        <dbReference type="PROSITE-ProRule" id="PRU00322"/>
    </source>
</evidence>
<evidence type="ECO:0000256" key="4">
    <source>
        <dbReference type="SAM" id="MobiDB-lite"/>
    </source>
</evidence>
<evidence type="ECO:0000303" key="5">
    <source>
    </source>
</evidence>
<evidence type="ECO:0000305" key="6"/>
<evidence type="ECO:0007744" key="7">
    <source>
    </source>
</evidence>
<evidence type="ECO:0007744" key="8">
    <source>
    </source>
</evidence>
<evidence type="ECO:0007744" key="9">
    <source>
    </source>
</evidence>
<proteinExistence type="evidence at protein level"/>
<name>ZRAB2_MOUSE</name>
<keyword id="KW-0007">Acetylation</keyword>
<keyword id="KW-0025">Alternative splicing</keyword>
<keyword id="KW-0479">Metal-binding</keyword>
<keyword id="KW-0507">mRNA processing</keyword>
<keyword id="KW-0508">mRNA splicing</keyword>
<keyword id="KW-0539">Nucleus</keyword>
<keyword id="KW-0597">Phosphoprotein</keyword>
<keyword id="KW-1185">Reference proteome</keyword>
<keyword id="KW-0677">Repeat</keyword>
<keyword id="KW-0694">RNA-binding</keyword>
<keyword id="KW-0862">Zinc</keyword>
<keyword id="KW-0863">Zinc-finger</keyword>
<sequence length="330" mass="37350">MSTKNFRVSDGDWICPDKKCGNVNFARRTSCNRCGREKTTEAKMMKAGGTEIGKTLAEKSRGLFSANDWQCKTCSNVNWARRSECNMCNTPKYAKLEERTGYGGGFNERENVEYIEREESDGEYDEFGRKKKKYRGKAVGPASILKEVEDKESEGEEEDEDEDLSKYKLDEDEDEDDADLSKYNLDASEEEDSNKKKSNRRSRSKSRSSHSRSSSRSSSPSSSRSRSRSRSRSSSSSQSRSHSGSREHSRSRGSKSRSSSRSHRGSSSPRKRSYSSSSSSPERDRKRSRSRPSSPAVRKKRRTRSRSPERHHRSSSGSTHSGSRSSSKKK</sequence>
<feature type="chain" id="PRO_0000066586" description="Zinc finger Ran-binding domain-containing protein 2">
    <location>
        <begin position="1"/>
        <end position="330"/>
    </location>
</feature>
<feature type="zinc finger region" description="RanBP2-type 1" evidence="3">
    <location>
        <begin position="9"/>
        <end position="40"/>
    </location>
</feature>
<feature type="zinc finger region" description="RanBP2-type 2" evidence="3">
    <location>
        <begin position="65"/>
        <end position="94"/>
    </location>
</feature>
<feature type="region of interest" description="Disordered" evidence="4">
    <location>
        <begin position="117"/>
        <end position="330"/>
    </location>
</feature>
<feature type="region of interest" description="Required for nuclear targeting" evidence="1">
    <location>
        <begin position="151"/>
        <end position="324"/>
    </location>
</feature>
<feature type="compositionally biased region" description="Acidic residues" evidence="4">
    <location>
        <begin position="150"/>
        <end position="163"/>
    </location>
</feature>
<feature type="compositionally biased region" description="Basic residues" evidence="4">
    <location>
        <begin position="196"/>
        <end position="210"/>
    </location>
</feature>
<feature type="compositionally biased region" description="Low complexity" evidence="4">
    <location>
        <begin position="211"/>
        <end position="224"/>
    </location>
</feature>
<feature type="compositionally biased region" description="Low complexity" evidence="4">
    <location>
        <begin position="232"/>
        <end position="242"/>
    </location>
</feature>
<feature type="compositionally biased region" description="Basic residues" evidence="4">
    <location>
        <begin position="251"/>
        <end position="273"/>
    </location>
</feature>
<feature type="compositionally biased region" description="Basic residues" evidence="4">
    <location>
        <begin position="297"/>
        <end position="314"/>
    </location>
</feature>
<feature type="compositionally biased region" description="Low complexity" evidence="4">
    <location>
        <begin position="315"/>
        <end position="330"/>
    </location>
</feature>
<feature type="modified residue" description="Phosphoserine" evidence="2">
    <location>
        <position position="9"/>
    </location>
</feature>
<feature type="modified residue" description="N6-acetyllysine" evidence="9">
    <location>
        <position position="18"/>
    </location>
</feature>
<feature type="modified residue" description="N6-acetyllysine" evidence="9">
    <location>
        <position position="54"/>
    </location>
</feature>
<feature type="modified residue" description="N6-acetyllysine" evidence="9">
    <location>
        <position position="92"/>
    </location>
</feature>
<feature type="modified residue" description="Phosphoserine" evidence="7 8">
    <location>
        <position position="120"/>
    </location>
</feature>
<feature type="modified residue" description="Phosphoserine" evidence="8">
    <location>
        <position position="153"/>
    </location>
</feature>
<feature type="modified residue" description="Phosphoserine" evidence="2">
    <location>
        <position position="181"/>
    </location>
</feature>
<feature type="modified residue" description="Phosphoserine" evidence="8">
    <location>
        <position position="188"/>
    </location>
</feature>
<feature type="modified residue" description="Phosphoserine" evidence="2">
    <location>
        <position position="193"/>
    </location>
</feature>
<feature type="splice variant" id="VSP_024946" description="In isoform 2." evidence="5">
    <location>
        <begin position="37"/>
        <end position="73"/>
    </location>
</feature>
<feature type="sequence conflict" description="In Ref. 3; AAF04474." evidence="6" ref="3">
    <original>N</original>
    <variation>D</variation>
    <location>
        <position position="86"/>
    </location>
</feature>
<feature type="sequence conflict" description="In Ref. 3; AAF04474." evidence="6" ref="3">
    <original>N</original>
    <variation>S</variation>
    <location>
        <position position="111"/>
    </location>
</feature>
<protein>
    <recommendedName>
        <fullName>Zinc finger Ran-binding domain-containing protein 2</fullName>
    </recommendedName>
    <alternativeName>
        <fullName>Zinc finger protein 265</fullName>
    </alternativeName>
    <alternativeName>
        <fullName>Zinc finger, splicing</fullName>
    </alternativeName>
</protein>
<organism>
    <name type="scientific">Mus musculus</name>
    <name type="common">Mouse</name>
    <dbReference type="NCBI Taxonomy" id="10090"/>
    <lineage>
        <taxon>Eukaryota</taxon>
        <taxon>Metazoa</taxon>
        <taxon>Chordata</taxon>
        <taxon>Craniata</taxon>
        <taxon>Vertebrata</taxon>
        <taxon>Euteleostomi</taxon>
        <taxon>Mammalia</taxon>
        <taxon>Eutheria</taxon>
        <taxon>Euarchontoglires</taxon>
        <taxon>Glires</taxon>
        <taxon>Rodentia</taxon>
        <taxon>Myomorpha</taxon>
        <taxon>Muroidea</taxon>
        <taxon>Muridae</taxon>
        <taxon>Murinae</taxon>
        <taxon>Mus</taxon>
        <taxon>Mus</taxon>
    </lineage>
</organism>
<dbReference type="EMBL" id="AK146275">
    <property type="protein sequence ID" value="BAE27034.1"/>
    <property type="molecule type" value="mRNA"/>
</dbReference>
<dbReference type="EMBL" id="AK150291">
    <property type="protein sequence ID" value="BAE29446.1"/>
    <property type="molecule type" value="mRNA"/>
</dbReference>
<dbReference type="EMBL" id="AK152536">
    <property type="protein sequence ID" value="BAE31292.1"/>
    <property type="molecule type" value="mRNA"/>
</dbReference>
<dbReference type="EMBL" id="AK160862">
    <property type="protein sequence ID" value="BAE36054.1"/>
    <property type="status" value="ALT_FRAME"/>
    <property type="molecule type" value="mRNA"/>
</dbReference>
<dbReference type="EMBL" id="AK166534">
    <property type="protein sequence ID" value="BAE38837.1"/>
    <property type="status" value="ALT_INIT"/>
    <property type="molecule type" value="mRNA"/>
</dbReference>
<dbReference type="EMBL" id="AK167756">
    <property type="protein sequence ID" value="BAE39790.1"/>
    <property type="status" value="ALT_FRAME"/>
    <property type="molecule type" value="mRNA"/>
</dbReference>
<dbReference type="EMBL" id="AK167766">
    <property type="protein sequence ID" value="BAE39799.1"/>
    <property type="molecule type" value="mRNA"/>
</dbReference>
<dbReference type="EMBL" id="AK167862">
    <property type="protein sequence ID" value="BAE39880.1"/>
    <property type="molecule type" value="mRNA"/>
</dbReference>
<dbReference type="EMBL" id="AK167983">
    <property type="protein sequence ID" value="BAE39974.1"/>
    <property type="molecule type" value="mRNA"/>
</dbReference>
<dbReference type="EMBL" id="AK168033">
    <property type="protein sequence ID" value="BAE40017.1"/>
    <property type="status" value="ALT_FRAME"/>
    <property type="molecule type" value="mRNA"/>
</dbReference>
<dbReference type="EMBL" id="AK168162">
    <property type="protein sequence ID" value="BAE40123.1"/>
    <property type="molecule type" value="mRNA"/>
</dbReference>
<dbReference type="EMBL" id="AK168613">
    <property type="protein sequence ID" value="BAE40479.1"/>
    <property type="molecule type" value="mRNA"/>
</dbReference>
<dbReference type="EMBL" id="AK169114">
    <property type="protein sequence ID" value="BAE40895.1"/>
    <property type="molecule type" value="mRNA"/>
</dbReference>
<dbReference type="EMBL" id="AK169335">
    <property type="protein sequence ID" value="BAE41087.1"/>
    <property type="molecule type" value="mRNA"/>
</dbReference>
<dbReference type="EMBL" id="BC132547">
    <property type="protein sequence ID" value="AAI32548.1"/>
    <property type="molecule type" value="mRNA"/>
</dbReference>
<dbReference type="EMBL" id="AF133818">
    <property type="protein sequence ID" value="AAF04474.1"/>
    <property type="status" value="ALT_FRAME"/>
    <property type="molecule type" value="mRNA"/>
</dbReference>
<dbReference type="CCDS" id="CCDS51100.1">
    <molecule id="Q9R020-1"/>
</dbReference>
<dbReference type="RefSeq" id="NP_059077.1">
    <molecule id="Q9R020-1"/>
    <property type="nucleotide sequence ID" value="NM_017381.4"/>
</dbReference>
<dbReference type="RefSeq" id="XP_017175137.1">
    <property type="nucleotide sequence ID" value="XM_017319648.1"/>
</dbReference>
<dbReference type="SMR" id="Q9R020"/>
<dbReference type="BioGRID" id="207495">
    <property type="interactions" value="13"/>
</dbReference>
<dbReference type="FunCoup" id="Q9R020">
    <property type="interactions" value="416"/>
</dbReference>
<dbReference type="IntAct" id="Q9R020">
    <property type="interactions" value="1"/>
</dbReference>
<dbReference type="STRING" id="10090.ENSMUSP00000101673"/>
<dbReference type="iPTMnet" id="Q9R020"/>
<dbReference type="PhosphoSitePlus" id="Q9R020"/>
<dbReference type="jPOST" id="Q9R020"/>
<dbReference type="PaxDb" id="10090-ENSMUSP00000101673"/>
<dbReference type="ProteomicsDB" id="275315">
    <molecule id="Q9R020-1"/>
</dbReference>
<dbReference type="ProteomicsDB" id="275316">
    <molecule id="Q9R020-2"/>
</dbReference>
<dbReference type="Pumba" id="Q9R020"/>
<dbReference type="Antibodypedia" id="19679">
    <property type="antibodies" value="281 antibodies from 30 providers"/>
</dbReference>
<dbReference type="DNASU" id="53861"/>
<dbReference type="Ensembl" id="ENSMUST00000106058.8">
    <molecule id="Q9R020-1"/>
    <property type="protein sequence ID" value="ENSMUSP00000101673.3"/>
    <property type="gene ID" value="ENSMUSG00000028180.19"/>
</dbReference>
<dbReference type="GeneID" id="53861"/>
<dbReference type="KEGG" id="mmu:53861"/>
<dbReference type="UCSC" id="uc008rve.1">
    <molecule id="Q9R020-1"/>
    <property type="organism name" value="mouse"/>
</dbReference>
<dbReference type="AGR" id="MGI:1858211"/>
<dbReference type="CTD" id="9406"/>
<dbReference type="MGI" id="MGI:1858211">
    <property type="gene designation" value="Zranb2"/>
</dbReference>
<dbReference type="VEuPathDB" id="HostDB:ENSMUSG00000028180"/>
<dbReference type="eggNOG" id="KOG1995">
    <property type="taxonomic scope" value="Eukaryota"/>
</dbReference>
<dbReference type="GeneTree" id="ENSGT00730000111078"/>
<dbReference type="InParanoid" id="Q9R020"/>
<dbReference type="OMA" id="WICPDID"/>
<dbReference type="OrthoDB" id="1878647at2759"/>
<dbReference type="BioGRID-ORCS" id="53861">
    <property type="hits" value="10 hits in 80 CRISPR screens"/>
</dbReference>
<dbReference type="ChiTaRS" id="Zranb2">
    <property type="organism name" value="mouse"/>
</dbReference>
<dbReference type="PRO" id="PR:Q9R020"/>
<dbReference type="Proteomes" id="UP000000589">
    <property type="component" value="Chromosome 3"/>
</dbReference>
<dbReference type="RNAct" id="Q9R020">
    <property type="molecule type" value="protein"/>
</dbReference>
<dbReference type="Bgee" id="ENSMUSG00000028180">
    <property type="expression patterns" value="Expressed in undifferentiated genital tubercle and 260 other cell types or tissues"/>
</dbReference>
<dbReference type="ExpressionAtlas" id="Q9R020">
    <property type="expression patterns" value="baseline and differential"/>
</dbReference>
<dbReference type="GO" id="GO:0005654">
    <property type="term" value="C:nucleoplasm"/>
    <property type="evidence" value="ECO:0007669"/>
    <property type="project" value="Ensembl"/>
</dbReference>
<dbReference type="GO" id="GO:0003723">
    <property type="term" value="F:RNA binding"/>
    <property type="evidence" value="ECO:0007669"/>
    <property type="project" value="UniProtKB-KW"/>
</dbReference>
<dbReference type="GO" id="GO:0008270">
    <property type="term" value="F:zinc ion binding"/>
    <property type="evidence" value="ECO:0007669"/>
    <property type="project" value="UniProtKB-KW"/>
</dbReference>
<dbReference type="GO" id="GO:0006397">
    <property type="term" value="P:mRNA processing"/>
    <property type="evidence" value="ECO:0007669"/>
    <property type="project" value="UniProtKB-KW"/>
</dbReference>
<dbReference type="GO" id="GO:0008380">
    <property type="term" value="P:RNA splicing"/>
    <property type="evidence" value="ECO:0007669"/>
    <property type="project" value="UniProtKB-KW"/>
</dbReference>
<dbReference type="FunFam" id="4.10.1060.10:FF:000004">
    <property type="entry name" value="Zinc finger Ran-binding domain-containing protein 2"/>
    <property type="match status" value="1"/>
</dbReference>
<dbReference type="FunFam" id="4.10.1060.10:FF:000007">
    <property type="entry name" value="Zinc finger Ran-binding domain-containing protein 2"/>
    <property type="match status" value="1"/>
</dbReference>
<dbReference type="Gene3D" id="4.10.1060.10">
    <property type="entry name" value="Zinc finger, RanBP2-type"/>
    <property type="match status" value="2"/>
</dbReference>
<dbReference type="InterPro" id="IPR001876">
    <property type="entry name" value="Znf_RanBP2"/>
</dbReference>
<dbReference type="InterPro" id="IPR036443">
    <property type="entry name" value="Znf_RanBP2_sf"/>
</dbReference>
<dbReference type="InterPro" id="IPR017337">
    <property type="entry name" value="ZRANB2"/>
</dbReference>
<dbReference type="PANTHER" id="PTHR12999:SF21">
    <property type="entry name" value="ZINC FINGER RAN-BINDING DOMAIN-CONTAINING PROTEIN 2"/>
    <property type="match status" value="1"/>
</dbReference>
<dbReference type="PANTHER" id="PTHR12999">
    <property type="entry name" value="ZINC FINGER RAN-BINDING DOMAIN-CONTAINING PROTEIN 2 ZRANB2-RELATED"/>
    <property type="match status" value="1"/>
</dbReference>
<dbReference type="Pfam" id="PF00641">
    <property type="entry name" value="Zn_ribbon_RanBP"/>
    <property type="match status" value="2"/>
</dbReference>
<dbReference type="PIRSF" id="PIRSF037956">
    <property type="entry name" value="UCP037956_ZnF_Ran"/>
    <property type="match status" value="1"/>
</dbReference>
<dbReference type="SMART" id="SM00547">
    <property type="entry name" value="ZnF_RBZ"/>
    <property type="match status" value="2"/>
</dbReference>
<dbReference type="SUPFAM" id="SSF90209">
    <property type="entry name" value="Ran binding protein zinc finger-like"/>
    <property type="match status" value="2"/>
</dbReference>
<dbReference type="PROSITE" id="PS01358">
    <property type="entry name" value="ZF_RANBP2_1"/>
    <property type="match status" value="2"/>
</dbReference>
<dbReference type="PROSITE" id="PS50199">
    <property type="entry name" value="ZF_RANBP2_2"/>
    <property type="match status" value="2"/>
</dbReference>
<gene>
    <name type="primary">Zranb2</name>
    <name type="synonym">Zfp265</name>
    <name type="synonym">Zis</name>
    <name type="synonym">Znf265</name>
</gene>
<accession>Q9R020</accession>
<accession>Q3TI29</accession>
<accession>Q3TLF5</accession>
<accession>Q3TUB7</accession>
<accession>Q3UD16</accession>
<reference key="1">
    <citation type="journal article" date="2005" name="Science">
        <title>The transcriptional landscape of the mammalian genome.</title>
        <authorList>
            <person name="Carninci P."/>
            <person name="Kasukawa T."/>
            <person name="Katayama S."/>
            <person name="Gough J."/>
            <person name="Frith M.C."/>
            <person name="Maeda N."/>
            <person name="Oyama R."/>
            <person name="Ravasi T."/>
            <person name="Lenhard B."/>
            <person name="Wells C."/>
            <person name="Kodzius R."/>
            <person name="Shimokawa K."/>
            <person name="Bajic V.B."/>
            <person name="Brenner S.E."/>
            <person name="Batalov S."/>
            <person name="Forrest A.R."/>
            <person name="Zavolan M."/>
            <person name="Davis M.J."/>
            <person name="Wilming L.G."/>
            <person name="Aidinis V."/>
            <person name="Allen J.E."/>
            <person name="Ambesi-Impiombato A."/>
            <person name="Apweiler R."/>
            <person name="Aturaliya R.N."/>
            <person name="Bailey T.L."/>
            <person name="Bansal M."/>
            <person name="Baxter L."/>
            <person name="Beisel K.W."/>
            <person name="Bersano T."/>
            <person name="Bono H."/>
            <person name="Chalk A.M."/>
            <person name="Chiu K.P."/>
            <person name="Choudhary V."/>
            <person name="Christoffels A."/>
            <person name="Clutterbuck D.R."/>
            <person name="Crowe M.L."/>
            <person name="Dalla E."/>
            <person name="Dalrymple B.P."/>
            <person name="de Bono B."/>
            <person name="Della Gatta G."/>
            <person name="di Bernardo D."/>
            <person name="Down T."/>
            <person name="Engstrom P."/>
            <person name="Fagiolini M."/>
            <person name="Faulkner G."/>
            <person name="Fletcher C.F."/>
            <person name="Fukushima T."/>
            <person name="Furuno M."/>
            <person name="Futaki S."/>
            <person name="Gariboldi M."/>
            <person name="Georgii-Hemming P."/>
            <person name="Gingeras T.R."/>
            <person name="Gojobori T."/>
            <person name="Green R.E."/>
            <person name="Gustincich S."/>
            <person name="Harbers M."/>
            <person name="Hayashi Y."/>
            <person name="Hensch T.K."/>
            <person name="Hirokawa N."/>
            <person name="Hill D."/>
            <person name="Huminiecki L."/>
            <person name="Iacono M."/>
            <person name="Ikeo K."/>
            <person name="Iwama A."/>
            <person name="Ishikawa T."/>
            <person name="Jakt M."/>
            <person name="Kanapin A."/>
            <person name="Katoh M."/>
            <person name="Kawasawa Y."/>
            <person name="Kelso J."/>
            <person name="Kitamura H."/>
            <person name="Kitano H."/>
            <person name="Kollias G."/>
            <person name="Krishnan S.P."/>
            <person name="Kruger A."/>
            <person name="Kummerfeld S.K."/>
            <person name="Kurochkin I.V."/>
            <person name="Lareau L.F."/>
            <person name="Lazarevic D."/>
            <person name="Lipovich L."/>
            <person name="Liu J."/>
            <person name="Liuni S."/>
            <person name="McWilliam S."/>
            <person name="Madan Babu M."/>
            <person name="Madera M."/>
            <person name="Marchionni L."/>
            <person name="Matsuda H."/>
            <person name="Matsuzawa S."/>
            <person name="Miki H."/>
            <person name="Mignone F."/>
            <person name="Miyake S."/>
            <person name="Morris K."/>
            <person name="Mottagui-Tabar S."/>
            <person name="Mulder N."/>
            <person name="Nakano N."/>
            <person name="Nakauchi H."/>
            <person name="Ng P."/>
            <person name="Nilsson R."/>
            <person name="Nishiguchi S."/>
            <person name="Nishikawa S."/>
            <person name="Nori F."/>
            <person name="Ohara O."/>
            <person name="Okazaki Y."/>
            <person name="Orlando V."/>
            <person name="Pang K.C."/>
            <person name="Pavan W.J."/>
            <person name="Pavesi G."/>
            <person name="Pesole G."/>
            <person name="Petrovsky N."/>
            <person name="Piazza S."/>
            <person name="Reed J."/>
            <person name="Reid J.F."/>
            <person name="Ring B.Z."/>
            <person name="Ringwald M."/>
            <person name="Rost B."/>
            <person name="Ruan Y."/>
            <person name="Salzberg S.L."/>
            <person name="Sandelin A."/>
            <person name="Schneider C."/>
            <person name="Schoenbach C."/>
            <person name="Sekiguchi K."/>
            <person name="Semple C.A."/>
            <person name="Seno S."/>
            <person name="Sessa L."/>
            <person name="Sheng Y."/>
            <person name="Shibata Y."/>
            <person name="Shimada H."/>
            <person name="Shimada K."/>
            <person name="Silva D."/>
            <person name="Sinclair B."/>
            <person name="Sperling S."/>
            <person name="Stupka E."/>
            <person name="Sugiura K."/>
            <person name="Sultana R."/>
            <person name="Takenaka Y."/>
            <person name="Taki K."/>
            <person name="Tammoja K."/>
            <person name="Tan S.L."/>
            <person name="Tang S."/>
            <person name="Taylor M.S."/>
            <person name="Tegner J."/>
            <person name="Teichmann S.A."/>
            <person name="Ueda H.R."/>
            <person name="van Nimwegen E."/>
            <person name="Verardo R."/>
            <person name="Wei C.L."/>
            <person name="Yagi K."/>
            <person name="Yamanishi H."/>
            <person name="Zabarovsky E."/>
            <person name="Zhu S."/>
            <person name="Zimmer A."/>
            <person name="Hide W."/>
            <person name="Bult C."/>
            <person name="Grimmond S.M."/>
            <person name="Teasdale R.D."/>
            <person name="Liu E.T."/>
            <person name="Brusic V."/>
            <person name="Quackenbush J."/>
            <person name="Wahlestedt C."/>
            <person name="Mattick J.S."/>
            <person name="Hume D.A."/>
            <person name="Kai C."/>
            <person name="Sasaki D."/>
            <person name="Tomaru Y."/>
            <person name="Fukuda S."/>
            <person name="Kanamori-Katayama M."/>
            <person name="Suzuki M."/>
            <person name="Aoki J."/>
            <person name="Arakawa T."/>
            <person name="Iida J."/>
            <person name="Imamura K."/>
            <person name="Itoh M."/>
            <person name="Kato T."/>
            <person name="Kawaji H."/>
            <person name="Kawagashira N."/>
            <person name="Kawashima T."/>
            <person name="Kojima M."/>
            <person name="Kondo S."/>
            <person name="Konno H."/>
            <person name="Nakano K."/>
            <person name="Ninomiya N."/>
            <person name="Nishio T."/>
            <person name="Okada M."/>
            <person name="Plessy C."/>
            <person name="Shibata K."/>
            <person name="Shiraki T."/>
            <person name="Suzuki S."/>
            <person name="Tagami M."/>
            <person name="Waki K."/>
            <person name="Watahiki A."/>
            <person name="Okamura-Oho Y."/>
            <person name="Suzuki H."/>
            <person name="Kawai J."/>
            <person name="Hayashizaki Y."/>
        </authorList>
    </citation>
    <scope>NUCLEOTIDE SEQUENCE [LARGE SCALE MRNA] (ISOFORMS 1 AND 2)</scope>
    <source>
        <strain>BALB/cJ</strain>
        <strain>C57BL/6J</strain>
        <tissue>Amnion</tissue>
        <tissue>Brain</tissue>
        <tissue>Embryo</tissue>
        <tissue>Embryonic stomach</tissue>
        <tissue>Erythroblast</tissue>
        <tissue>Macrophage</tissue>
    </source>
</reference>
<reference key="2">
    <citation type="journal article" date="2004" name="Genome Res.">
        <title>The status, quality, and expansion of the NIH full-length cDNA project: the Mammalian Gene Collection (MGC).</title>
        <authorList>
            <consortium name="The MGC Project Team"/>
        </authorList>
    </citation>
    <scope>NUCLEOTIDE SEQUENCE [LARGE SCALE MRNA] (ISOFORM 1)</scope>
    <source>
        <tissue>Brain</tissue>
    </source>
</reference>
<reference key="3">
    <citation type="journal article" date="2000" name="Cytogenet. Cell Genet.">
        <title>Chromosome localization and characterization of the mouse and human zinc finger protein 265 gene.</title>
        <authorList>
            <person name="Adams D.J."/>
            <person name="van der Weyden L."/>
            <person name="Kovacic A."/>
            <person name="Lovicu F.J."/>
            <person name="Copeland N.G."/>
            <person name="Gilbert D.J."/>
            <person name="Jenkins N.A."/>
            <person name="Ioannou P.A."/>
            <person name="Morris B.J."/>
        </authorList>
    </citation>
    <scope>NUCLEOTIDE SEQUENCE [MRNA] OF 1-327 (ISOFORM 1)</scope>
    <source>
        <tissue>Kidney</tissue>
    </source>
</reference>
<reference key="4">
    <citation type="journal article" date="2007" name="Proc. Natl. Acad. Sci. U.S.A.">
        <title>Large-scale phosphorylation analysis of mouse liver.</title>
        <authorList>
            <person name="Villen J."/>
            <person name="Beausoleil S.A."/>
            <person name="Gerber S.A."/>
            <person name="Gygi S.P."/>
        </authorList>
    </citation>
    <scope>PHOSPHORYLATION [LARGE SCALE ANALYSIS] AT SER-120</scope>
    <scope>IDENTIFICATION BY MASS SPECTROMETRY [LARGE SCALE ANALYSIS]</scope>
    <source>
        <tissue>Liver</tissue>
    </source>
</reference>
<reference key="5">
    <citation type="journal article" date="2009" name="Mol. Cell. Proteomics">
        <title>Large scale localization of protein phosphorylation by use of electron capture dissociation mass spectrometry.</title>
        <authorList>
            <person name="Sweet S.M."/>
            <person name="Bailey C.M."/>
            <person name="Cunningham D.L."/>
            <person name="Heath J.K."/>
            <person name="Cooper H.J."/>
        </authorList>
    </citation>
    <scope>IDENTIFICATION BY MASS SPECTROMETRY [LARGE SCALE ANALYSIS]</scope>
    <source>
        <tissue>Embryonic fibroblast</tissue>
    </source>
</reference>
<reference key="6">
    <citation type="journal article" date="2010" name="Cell">
        <title>A tissue-specific atlas of mouse protein phosphorylation and expression.</title>
        <authorList>
            <person name="Huttlin E.L."/>
            <person name="Jedrychowski M.P."/>
            <person name="Elias J.E."/>
            <person name="Goswami T."/>
            <person name="Rad R."/>
            <person name="Beausoleil S.A."/>
            <person name="Villen J."/>
            <person name="Haas W."/>
            <person name="Sowa M.E."/>
            <person name="Gygi S.P."/>
        </authorList>
    </citation>
    <scope>PHOSPHORYLATION [LARGE SCALE ANALYSIS] AT SER-120; SER-153 AND SER-188</scope>
    <scope>IDENTIFICATION BY MASS SPECTROMETRY [LARGE SCALE ANALYSIS]</scope>
    <source>
        <tissue>Brain</tissue>
        <tissue>Brown adipose tissue</tissue>
        <tissue>Heart</tissue>
        <tissue>Kidney</tissue>
        <tissue>Liver</tissue>
        <tissue>Lung</tissue>
        <tissue>Pancreas</tissue>
        <tissue>Spleen</tissue>
        <tissue>Testis</tissue>
    </source>
</reference>
<reference key="7">
    <citation type="journal article" date="2013" name="Mol. Cell">
        <title>SIRT5-mediated lysine desuccinylation impacts diverse metabolic pathways.</title>
        <authorList>
            <person name="Park J."/>
            <person name="Chen Y."/>
            <person name="Tishkoff D.X."/>
            <person name="Peng C."/>
            <person name="Tan M."/>
            <person name="Dai L."/>
            <person name="Xie Z."/>
            <person name="Zhang Y."/>
            <person name="Zwaans B.M."/>
            <person name="Skinner M.E."/>
            <person name="Lombard D.B."/>
            <person name="Zhao Y."/>
        </authorList>
    </citation>
    <scope>ACETYLATION [LARGE SCALE ANALYSIS] AT LYS-18; LYS-54 AND LYS-92</scope>
    <scope>IDENTIFICATION BY MASS SPECTROMETRY [LARGE SCALE ANALYSIS]</scope>
    <source>
        <tissue>Embryonic fibroblast</tissue>
    </source>
</reference>